<proteinExistence type="inferred from homology"/>
<dbReference type="EC" id="1.2.1.72" evidence="1"/>
<dbReference type="EMBL" id="CP000472">
    <property type="protein sequence ID" value="ACJ30897.1"/>
    <property type="molecule type" value="Genomic_DNA"/>
</dbReference>
<dbReference type="RefSeq" id="WP_020914234.1">
    <property type="nucleotide sequence ID" value="NC_011566.1"/>
</dbReference>
<dbReference type="SMR" id="B8CU41"/>
<dbReference type="STRING" id="225849.swp_4243"/>
<dbReference type="KEGG" id="swp:swp_4243"/>
<dbReference type="eggNOG" id="COG0057">
    <property type="taxonomic scope" value="Bacteria"/>
</dbReference>
<dbReference type="HOGENOM" id="CLU_030140_0_2_6"/>
<dbReference type="OrthoDB" id="9803304at2"/>
<dbReference type="UniPathway" id="UPA00244">
    <property type="reaction ID" value="UER00309"/>
</dbReference>
<dbReference type="Proteomes" id="UP000000753">
    <property type="component" value="Chromosome"/>
</dbReference>
<dbReference type="GO" id="GO:0005737">
    <property type="term" value="C:cytoplasm"/>
    <property type="evidence" value="ECO:0007669"/>
    <property type="project" value="UniProtKB-SubCell"/>
</dbReference>
<dbReference type="GO" id="GO:0048001">
    <property type="term" value="F:erythrose-4-phosphate dehydrogenase activity"/>
    <property type="evidence" value="ECO:0007669"/>
    <property type="project" value="UniProtKB-UniRule"/>
</dbReference>
<dbReference type="GO" id="GO:0051287">
    <property type="term" value="F:NAD binding"/>
    <property type="evidence" value="ECO:0007669"/>
    <property type="project" value="InterPro"/>
</dbReference>
<dbReference type="GO" id="GO:0050661">
    <property type="term" value="F:NADP binding"/>
    <property type="evidence" value="ECO:0007669"/>
    <property type="project" value="InterPro"/>
</dbReference>
<dbReference type="GO" id="GO:0006006">
    <property type="term" value="P:glucose metabolic process"/>
    <property type="evidence" value="ECO:0007669"/>
    <property type="project" value="InterPro"/>
</dbReference>
<dbReference type="GO" id="GO:0042823">
    <property type="term" value="P:pyridoxal phosphate biosynthetic process"/>
    <property type="evidence" value="ECO:0007669"/>
    <property type="project" value="UniProtKB-UniRule"/>
</dbReference>
<dbReference type="GO" id="GO:0008615">
    <property type="term" value="P:pyridoxine biosynthetic process"/>
    <property type="evidence" value="ECO:0007669"/>
    <property type="project" value="UniProtKB-UniRule"/>
</dbReference>
<dbReference type="CDD" id="cd23937">
    <property type="entry name" value="GAPDH_C_E4PDH"/>
    <property type="match status" value="1"/>
</dbReference>
<dbReference type="CDD" id="cd17892">
    <property type="entry name" value="GAPDH_N_E4PDH"/>
    <property type="match status" value="1"/>
</dbReference>
<dbReference type="FunFam" id="3.30.360.10:FF:000007">
    <property type="entry name" value="D-erythrose-4-phosphate dehydrogenase"/>
    <property type="match status" value="1"/>
</dbReference>
<dbReference type="FunFam" id="3.40.50.720:FF:000001">
    <property type="entry name" value="Glyceraldehyde-3-phosphate dehydrogenase"/>
    <property type="match status" value="1"/>
</dbReference>
<dbReference type="Gene3D" id="3.30.360.10">
    <property type="entry name" value="Dihydrodipicolinate Reductase, domain 2"/>
    <property type="match status" value="1"/>
</dbReference>
<dbReference type="Gene3D" id="3.40.50.720">
    <property type="entry name" value="NAD(P)-binding Rossmann-like Domain"/>
    <property type="match status" value="1"/>
</dbReference>
<dbReference type="HAMAP" id="MF_01640">
    <property type="entry name" value="E4P_dehydrog"/>
    <property type="match status" value="1"/>
</dbReference>
<dbReference type="InterPro" id="IPR006422">
    <property type="entry name" value="E4P_DH_bac"/>
</dbReference>
<dbReference type="InterPro" id="IPR020831">
    <property type="entry name" value="GlycerAld/Erythrose_P_DH"/>
</dbReference>
<dbReference type="InterPro" id="IPR020830">
    <property type="entry name" value="GlycerAld_3-P_DH_AS"/>
</dbReference>
<dbReference type="InterPro" id="IPR020829">
    <property type="entry name" value="GlycerAld_3-P_DH_cat"/>
</dbReference>
<dbReference type="InterPro" id="IPR020828">
    <property type="entry name" value="GlycerAld_3-P_DH_NAD(P)-bd"/>
</dbReference>
<dbReference type="InterPro" id="IPR006424">
    <property type="entry name" value="Glyceraldehyde-3-P_DH_1"/>
</dbReference>
<dbReference type="InterPro" id="IPR036291">
    <property type="entry name" value="NAD(P)-bd_dom_sf"/>
</dbReference>
<dbReference type="NCBIfam" id="TIGR01532">
    <property type="entry name" value="E4PD_g-proteo"/>
    <property type="match status" value="1"/>
</dbReference>
<dbReference type="NCBIfam" id="TIGR01534">
    <property type="entry name" value="GAPDH-I"/>
    <property type="match status" value="1"/>
</dbReference>
<dbReference type="NCBIfam" id="NF010058">
    <property type="entry name" value="PRK13535.1"/>
    <property type="match status" value="1"/>
</dbReference>
<dbReference type="PANTHER" id="PTHR43148">
    <property type="entry name" value="GLYCERALDEHYDE-3-PHOSPHATE DEHYDROGENASE 2"/>
    <property type="match status" value="1"/>
</dbReference>
<dbReference type="Pfam" id="PF02800">
    <property type="entry name" value="Gp_dh_C"/>
    <property type="match status" value="1"/>
</dbReference>
<dbReference type="Pfam" id="PF00044">
    <property type="entry name" value="Gp_dh_N"/>
    <property type="match status" value="1"/>
</dbReference>
<dbReference type="PIRSF" id="PIRSF000149">
    <property type="entry name" value="GAP_DH"/>
    <property type="match status" value="1"/>
</dbReference>
<dbReference type="PRINTS" id="PR00078">
    <property type="entry name" value="G3PDHDRGNASE"/>
</dbReference>
<dbReference type="SMART" id="SM00846">
    <property type="entry name" value="Gp_dh_N"/>
    <property type="match status" value="1"/>
</dbReference>
<dbReference type="SUPFAM" id="SSF55347">
    <property type="entry name" value="Glyceraldehyde-3-phosphate dehydrogenase-like, C-terminal domain"/>
    <property type="match status" value="1"/>
</dbReference>
<dbReference type="SUPFAM" id="SSF51735">
    <property type="entry name" value="NAD(P)-binding Rossmann-fold domains"/>
    <property type="match status" value="1"/>
</dbReference>
<dbReference type="PROSITE" id="PS00071">
    <property type="entry name" value="GAPDH"/>
    <property type="match status" value="1"/>
</dbReference>
<keyword id="KW-0963">Cytoplasm</keyword>
<keyword id="KW-0520">NAD</keyword>
<keyword id="KW-0560">Oxidoreductase</keyword>
<keyword id="KW-0664">Pyridoxine biosynthesis</keyword>
<sequence length="338" mass="37698">MIRVAINGYGRIGRSILRAVYESAKRDRIQIVAINELAKPEAMLHLTQYDTTHGRFHTQVKLDEQHMIIGDDAIKLLHEPNPANLPWQEMDIDIVFEATGVINDRQACEAHIEAGARQVLISHPSSSDVDATIVYGVNQDLLKAEHTIVSNASCTTNCIVPVIDVLDRHFQVKSGAITTIHSAMNDQQVIDAYHDDLRRTRAAGQSIIPVDTKLARGIERILPHMKDKFEAISVRVPTINVTAIDLSVTLDKRVDIEQVNRVLKQATEGSFSGVVGYTNEPLVSCDFNHDPRSSIVDGTQTRVSDGHLVKLLLWCDNEWGFANRMLDTSLEMIKARRA</sequence>
<accession>B8CU41</accession>
<feature type="chain" id="PRO_1000186842" description="D-erythrose-4-phosphate dehydrogenase">
    <location>
        <begin position="1"/>
        <end position="338"/>
    </location>
</feature>
<feature type="active site" description="Nucleophile" evidence="1">
    <location>
        <position position="154"/>
    </location>
</feature>
<feature type="binding site" evidence="1">
    <location>
        <begin position="11"/>
        <end position="12"/>
    </location>
    <ligand>
        <name>NAD(+)</name>
        <dbReference type="ChEBI" id="CHEBI:57540"/>
    </ligand>
</feature>
<feature type="binding site" evidence="1">
    <location>
        <begin position="153"/>
        <end position="155"/>
    </location>
    <ligand>
        <name>substrate</name>
    </ligand>
</feature>
<feature type="binding site" evidence="1">
    <location>
        <position position="199"/>
    </location>
    <ligand>
        <name>substrate</name>
    </ligand>
</feature>
<feature type="binding site" evidence="1">
    <location>
        <begin position="212"/>
        <end position="213"/>
    </location>
    <ligand>
        <name>substrate</name>
    </ligand>
</feature>
<feature type="binding site" evidence="1">
    <location>
        <position position="235"/>
    </location>
    <ligand>
        <name>substrate</name>
    </ligand>
</feature>
<feature type="binding site" evidence="1">
    <location>
        <position position="317"/>
    </location>
    <ligand>
        <name>NAD(+)</name>
        <dbReference type="ChEBI" id="CHEBI:57540"/>
    </ligand>
</feature>
<feature type="site" description="Activates thiol group during catalysis" evidence="1">
    <location>
        <position position="181"/>
    </location>
</feature>
<evidence type="ECO:0000255" key="1">
    <source>
        <dbReference type="HAMAP-Rule" id="MF_01640"/>
    </source>
</evidence>
<comment type="function">
    <text evidence="1">Catalyzes the NAD-dependent conversion of D-erythrose 4-phosphate to 4-phosphoerythronate.</text>
</comment>
<comment type="catalytic activity">
    <reaction evidence="1">
        <text>D-erythrose 4-phosphate + NAD(+) + H2O = 4-phospho-D-erythronate + NADH + 2 H(+)</text>
        <dbReference type="Rhea" id="RHEA:12056"/>
        <dbReference type="ChEBI" id="CHEBI:15377"/>
        <dbReference type="ChEBI" id="CHEBI:15378"/>
        <dbReference type="ChEBI" id="CHEBI:16897"/>
        <dbReference type="ChEBI" id="CHEBI:57540"/>
        <dbReference type="ChEBI" id="CHEBI:57945"/>
        <dbReference type="ChEBI" id="CHEBI:58766"/>
        <dbReference type="EC" id="1.2.1.72"/>
    </reaction>
</comment>
<comment type="pathway">
    <text evidence="1">Cofactor biosynthesis; pyridoxine 5'-phosphate biosynthesis; pyridoxine 5'-phosphate from D-erythrose 4-phosphate: step 1/5.</text>
</comment>
<comment type="subunit">
    <text evidence="1">Homotetramer.</text>
</comment>
<comment type="subcellular location">
    <subcellularLocation>
        <location evidence="1">Cytoplasm</location>
    </subcellularLocation>
</comment>
<comment type="similarity">
    <text evidence="1">Belongs to the glyceraldehyde-3-phosphate dehydrogenase family. Epd subfamily.</text>
</comment>
<organism>
    <name type="scientific">Shewanella piezotolerans (strain WP3 / JCM 13877)</name>
    <dbReference type="NCBI Taxonomy" id="225849"/>
    <lineage>
        <taxon>Bacteria</taxon>
        <taxon>Pseudomonadati</taxon>
        <taxon>Pseudomonadota</taxon>
        <taxon>Gammaproteobacteria</taxon>
        <taxon>Alteromonadales</taxon>
        <taxon>Shewanellaceae</taxon>
        <taxon>Shewanella</taxon>
    </lineage>
</organism>
<name>E4PD_SHEPW</name>
<gene>
    <name evidence="1" type="primary">epd</name>
    <name type="ordered locus">swp_4243</name>
</gene>
<reference key="1">
    <citation type="journal article" date="2008" name="PLoS ONE">
        <title>Environmental adaptation: genomic analysis of the piezotolerant and psychrotolerant deep-sea iron reducing bacterium Shewanella piezotolerans WP3.</title>
        <authorList>
            <person name="Wang F."/>
            <person name="Wang J."/>
            <person name="Jian H."/>
            <person name="Zhang B."/>
            <person name="Li S."/>
            <person name="Wang F."/>
            <person name="Zeng X."/>
            <person name="Gao L."/>
            <person name="Bartlett D.H."/>
            <person name="Yu J."/>
            <person name="Hu S."/>
            <person name="Xiao X."/>
        </authorList>
    </citation>
    <scope>NUCLEOTIDE SEQUENCE [LARGE SCALE GENOMIC DNA]</scope>
    <source>
        <strain>WP3 / JCM 13877</strain>
    </source>
</reference>
<protein>
    <recommendedName>
        <fullName evidence="1">D-erythrose-4-phosphate dehydrogenase</fullName>
        <shortName evidence="1">E4PDH</shortName>
        <ecNumber evidence="1">1.2.1.72</ecNumber>
    </recommendedName>
</protein>